<evidence type="ECO:0000255" key="1">
    <source>
        <dbReference type="HAMAP-Rule" id="MF_01588"/>
    </source>
</evidence>
<evidence type="ECO:0000305" key="2"/>
<protein>
    <recommendedName>
        <fullName evidence="1">DNA ligase</fullName>
        <ecNumber evidence="1">6.5.1.2</ecNumber>
    </recommendedName>
    <alternativeName>
        <fullName evidence="1">Polydeoxyribonucleotide synthase [NAD(+)]</fullName>
    </alternativeName>
</protein>
<gene>
    <name evidence="1" type="primary">ligA</name>
    <name type="ordered locus">TWT_414</name>
</gene>
<organism>
    <name type="scientific">Tropheryma whipplei (strain Twist)</name>
    <name type="common">Whipple's bacillus</name>
    <dbReference type="NCBI Taxonomy" id="203267"/>
    <lineage>
        <taxon>Bacteria</taxon>
        <taxon>Bacillati</taxon>
        <taxon>Actinomycetota</taxon>
        <taxon>Actinomycetes</taxon>
        <taxon>Micrococcales</taxon>
        <taxon>Tropherymataceae</taxon>
        <taxon>Tropheryma</taxon>
    </lineage>
</organism>
<accession>Q83G99</accession>
<feature type="chain" id="PRO_0000313500" description="DNA ligase">
    <location>
        <begin position="1"/>
        <end position="628"/>
    </location>
</feature>
<feature type="active site" description="N6-AMP-lysine intermediate" evidence="1">
    <location>
        <position position="119"/>
    </location>
</feature>
<feature type="binding site" evidence="1">
    <location>
        <begin position="36"/>
        <end position="40"/>
    </location>
    <ligand>
        <name>NAD(+)</name>
        <dbReference type="ChEBI" id="CHEBI:57540"/>
    </ligand>
</feature>
<feature type="binding site" evidence="1">
    <location>
        <begin position="85"/>
        <end position="86"/>
    </location>
    <ligand>
        <name>NAD(+)</name>
        <dbReference type="ChEBI" id="CHEBI:57540"/>
    </ligand>
</feature>
<feature type="binding site" evidence="1">
    <location>
        <position position="117"/>
    </location>
    <ligand>
        <name>NAD(+)</name>
        <dbReference type="ChEBI" id="CHEBI:57540"/>
    </ligand>
</feature>
<feature type="binding site" evidence="1">
    <location>
        <position position="140"/>
    </location>
    <ligand>
        <name>NAD(+)</name>
        <dbReference type="ChEBI" id="CHEBI:57540"/>
    </ligand>
</feature>
<feature type="binding site" evidence="1">
    <location>
        <position position="174"/>
    </location>
    <ligand>
        <name>NAD(+)</name>
        <dbReference type="ChEBI" id="CHEBI:57540"/>
    </ligand>
</feature>
<feature type="binding site" evidence="1">
    <location>
        <position position="309"/>
    </location>
    <ligand>
        <name>NAD(+)</name>
        <dbReference type="ChEBI" id="CHEBI:57540"/>
    </ligand>
</feature>
<feature type="binding site" evidence="1">
    <location>
        <position position="333"/>
    </location>
    <ligand>
        <name>NAD(+)</name>
        <dbReference type="ChEBI" id="CHEBI:57540"/>
    </ligand>
</feature>
<feature type="binding site" evidence="1">
    <location>
        <position position="427"/>
    </location>
    <ligand>
        <name>Zn(2+)</name>
        <dbReference type="ChEBI" id="CHEBI:29105"/>
    </ligand>
</feature>
<feature type="binding site" evidence="1">
    <location>
        <position position="430"/>
    </location>
    <ligand>
        <name>Zn(2+)</name>
        <dbReference type="ChEBI" id="CHEBI:29105"/>
    </ligand>
</feature>
<feature type="binding site" evidence="1">
    <location>
        <position position="446"/>
    </location>
    <ligand>
        <name>Zn(2+)</name>
        <dbReference type="ChEBI" id="CHEBI:29105"/>
    </ligand>
</feature>
<feature type="binding site" evidence="1">
    <location>
        <position position="452"/>
    </location>
    <ligand>
        <name>Zn(2+)</name>
        <dbReference type="ChEBI" id="CHEBI:29105"/>
    </ligand>
</feature>
<dbReference type="EC" id="6.5.1.2" evidence="1"/>
<dbReference type="EMBL" id="AE014184">
    <property type="protein sequence ID" value="AAO44511.1"/>
    <property type="status" value="ALT_INIT"/>
    <property type="molecule type" value="Genomic_DNA"/>
</dbReference>
<dbReference type="RefSeq" id="WP_033799964.1">
    <property type="nucleotide sequence ID" value="NC_004572.3"/>
</dbReference>
<dbReference type="SMR" id="Q83G99"/>
<dbReference type="STRING" id="203267.TWT_414"/>
<dbReference type="KEGG" id="twh:TWT_414"/>
<dbReference type="eggNOG" id="COG0272">
    <property type="taxonomic scope" value="Bacteria"/>
</dbReference>
<dbReference type="HOGENOM" id="CLU_007764_2_1_11"/>
<dbReference type="OrthoDB" id="9759736at2"/>
<dbReference type="Proteomes" id="UP000002200">
    <property type="component" value="Chromosome"/>
</dbReference>
<dbReference type="GO" id="GO:0005829">
    <property type="term" value="C:cytosol"/>
    <property type="evidence" value="ECO:0007669"/>
    <property type="project" value="TreeGrafter"/>
</dbReference>
<dbReference type="GO" id="GO:0003911">
    <property type="term" value="F:DNA ligase (NAD+) activity"/>
    <property type="evidence" value="ECO:0007669"/>
    <property type="project" value="UniProtKB-UniRule"/>
</dbReference>
<dbReference type="GO" id="GO:0046872">
    <property type="term" value="F:metal ion binding"/>
    <property type="evidence" value="ECO:0007669"/>
    <property type="project" value="UniProtKB-KW"/>
</dbReference>
<dbReference type="GO" id="GO:0006281">
    <property type="term" value="P:DNA repair"/>
    <property type="evidence" value="ECO:0007669"/>
    <property type="project" value="UniProtKB-KW"/>
</dbReference>
<dbReference type="GO" id="GO:0006260">
    <property type="term" value="P:DNA replication"/>
    <property type="evidence" value="ECO:0007669"/>
    <property type="project" value="UniProtKB-KW"/>
</dbReference>
<dbReference type="CDD" id="cd00114">
    <property type="entry name" value="LIGANc"/>
    <property type="match status" value="1"/>
</dbReference>
<dbReference type="FunFam" id="2.40.50.140:FF:000012">
    <property type="entry name" value="DNA ligase"/>
    <property type="match status" value="1"/>
</dbReference>
<dbReference type="Gene3D" id="6.20.10.30">
    <property type="match status" value="1"/>
</dbReference>
<dbReference type="Gene3D" id="1.10.150.20">
    <property type="entry name" value="5' to 3' exonuclease, C-terminal subdomain"/>
    <property type="match status" value="2"/>
</dbReference>
<dbReference type="Gene3D" id="3.30.470.30">
    <property type="entry name" value="DNA ligase/mRNA capping enzyme"/>
    <property type="match status" value="1"/>
</dbReference>
<dbReference type="Gene3D" id="1.10.287.610">
    <property type="entry name" value="Helix hairpin bin"/>
    <property type="match status" value="1"/>
</dbReference>
<dbReference type="Gene3D" id="2.40.50.140">
    <property type="entry name" value="Nucleic acid-binding proteins"/>
    <property type="match status" value="1"/>
</dbReference>
<dbReference type="HAMAP" id="MF_01588">
    <property type="entry name" value="DNA_ligase_A"/>
    <property type="match status" value="1"/>
</dbReference>
<dbReference type="InterPro" id="IPR041663">
    <property type="entry name" value="DisA/LigA_HHH"/>
</dbReference>
<dbReference type="InterPro" id="IPR001679">
    <property type="entry name" value="DNA_ligase"/>
</dbReference>
<dbReference type="InterPro" id="IPR018239">
    <property type="entry name" value="DNA_ligase_AS"/>
</dbReference>
<dbReference type="InterPro" id="IPR033136">
    <property type="entry name" value="DNA_ligase_CS"/>
</dbReference>
<dbReference type="InterPro" id="IPR013839">
    <property type="entry name" value="DNAligase_adenylation"/>
</dbReference>
<dbReference type="InterPro" id="IPR013840">
    <property type="entry name" value="DNAligase_N"/>
</dbReference>
<dbReference type="InterPro" id="IPR012340">
    <property type="entry name" value="NA-bd_OB-fold"/>
</dbReference>
<dbReference type="InterPro" id="IPR004150">
    <property type="entry name" value="NAD_DNA_ligase_OB"/>
</dbReference>
<dbReference type="InterPro" id="IPR010994">
    <property type="entry name" value="RuvA_2-like"/>
</dbReference>
<dbReference type="InterPro" id="IPR004149">
    <property type="entry name" value="Znf_DNAligase_C4"/>
</dbReference>
<dbReference type="NCBIfam" id="TIGR00575">
    <property type="entry name" value="dnlj"/>
    <property type="match status" value="1"/>
</dbReference>
<dbReference type="NCBIfam" id="NF005932">
    <property type="entry name" value="PRK07956.1"/>
    <property type="match status" value="1"/>
</dbReference>
<dbReference type="PANTHER" id="PTHR23389">
    <property type="entry name" value="CHROMOSOME TRANSMISSION FIDELITY FACTOR 18"/>
    <property type="match status" value="1"/>
</dbReference>
<dbReference type="PANTHER" id="PTHR23389:SF9">
    <property type="entry name" value="DNA LIGASE"/>
    <property type="match status" value="1"/>
</dbReference>
<dbReference type="Pfam" id="PF01653">
    <property type="entry name" value="DNA_ligase_aden"/>
    <property type="match status" value="1"/>
</dbReference>
<dbReference type="Pfam" id="PF03120">
    <property type="entry name" value="DNA_ligase_OB"/>
    <property type="match status" value="1"/>
</dbReference>
<dbReference type="Pfam" id="PF03119">
    <property type="entry name" value="DNA_ligase_ZBD"/>
    <property type="match status" value="1"/>
</dbReference>
<dbReference type="Pfam" id="PF12826">
    <property type="entry name" value="HHH_2"/>
    <property type="match status" value="1"/>
</dbReference>
<dbReference type="PIRSF" id="PIRSF001604">
    <property type="entry name" value="LigA"/>
    <property type="match status" value="1"/>
</dbReference>
<dbReference type="SMART" id="SM00532">
    <property type="entry name" value="LIGANc"/>
    <property type="match status" value="1"/>
</dbReference>
<dbReference type="SUPFAM" id="SSF56091">
    <property type="entry name" value="DNA ligase/mRNA capping enzyme, catalytic domain"/>
    <property type="match status" value="1"/>
</dbReference>
<dbReference type="SUPFAM" id="SSF50249">
    <property type="entry name" value="Nucleic acid-binding proteins"/>
    <property type="match status" value="1"/>
</dbReference>
<dbReference type="SUPFAM" id="SSF47781">
    <property type="entry name" value="RuvA domain 2-like"/>
    <property type="match status" value="1"/>
</dbReference>
<dbReference type="PROSITE" id="PS01055">
    <property type="entry name" value="DNA_LIGASE_N1"/>
    <property type="match status" value="1"/>
</dbReference>
<dbReference type="PROSITE" id="PS01056">
    <property type="entry name" value="DNA_LIGASE_N2"/>
    <property type="match status" value="1"/>
</dbReference>
<reference key="1">
    <citation type="journal article" date="2003" name="Genome Res.">
        <title>Tropheryma whipplei twist: a human pathogenic Actinobacteria with a reduced genome.</title>
        <authorList>
            <person name="Raoult D."/>
            <person name="Ogata H."/>
            <person name="Audic S."/>
            <person name="Robert C."/>
            <person name="Suhre K."/>
            <person name="Drancourt M."/>
            <person name="Claverie J.-M."/>
        </authorList>
    </citation>
    <scope>NUCLEOTIDE SEQUENCE [LARGE SCALE GENOMIC DNA]</scope>
    <source>
        <strain>Twist</strain>
    </source>
</reference>
<name>DNLJ_TROWT</name>
<keyword id="KW-0227">DNA damage</keyword>
<keyword id="KW-0234">DNA repair</keyword>
<keyword id="KW-0235">DNA replication</keyword>
<keyword id="KW-0436">Ligase</keyword>
<keyword id="KW-0460">Magnesium</keyword>
<keyword id="KW-0464">Manganese</keyword>
<keyword id="KW-0479">Metal-binding</keyword>
<keyword id="KW-0520">NAD</keyword>
<keyword id="KW-1185">Reference proteome</keyword>
<keyword id="KW-0862">Zinc</keyword>
<proteinExistence type="inferred from homology"/>
<sequence length="628" mass="70208">MPHPDGDLDRRIELLTAQIIAARKAYYQENTSLMSDVEYDALEHELKDAEHAKGFSDRNSPSLTVGIAAQLNLFEPVKHIEPMLSLDNVFSLDQLHSWYEKTKKICPEGDQCTFVCELKIDGVGVSLRYANGYLISAATRGDGAIGEDITQNMLYVPSIPPRIALPGIFEIRGEAFIKRDEFDRINQLSLERSKQFANPRNFVSGCIRTKTPNMRYLESISFYAHGFTQVYGYTSGGMNLHSDITASGGVKTEIEHGMFSAYSRLSECKIPVNSYNRLCTNFSEIESYIENIRLNRQCVPYAIDGIVVKIDSLQKQALLGSTTKAPRWAVAYKFPSESTVTRLLDIEVSVGRTGRVTPYAVLQPIQLDGSEVSRATLHNQKVIGDKDLLIGDYVRIRKAGDIVPEVLCALPEKRDGSEVLFKMPSLCPSCGAELMPSKLGDIDLRCPNMQSCLVQLAGRLEYIGSRGVLDIAYLAEENAYALSHLRKFGKSAEVQLFKITIDDLVALEFMYKGNMRSPFRKKGDSFPGFEEPTKSAQDMVDSIERAKRSPLWKFLLALNIRHIGPASAKALADHFGSIESIINAKIDELLKVRSLGETIAISVHDWFRDPWRVELVNTWRSDGALFGH</sequence>
<comment type="function">
    <text evidence="1">DNA ligase that catalyzes the formation of phosphodiester linkages between 5'-phosphoryl and 3'-hydroxyl groups in double-stranded DNA using NAD as a coenzyme and as the energy source for the reaction. It is essential for DNA replication and repair of damaged DNA.</text>
</comment>
<comment type="catalytic activity">
    <reaction evidence="1">
        <text>NAD(+) + (deoxyribonucleotide)n-3'-hydroxyl + 5'-phospho-(deoxyribonucleotide)m = (deoxyribonucleotide)n+m + AMP + beta-nicotinamide D-nucleotide.</text>
        <dbReference type="EC" id="6.5.1.2"/>
    </reaction>
</comment>
<comment type="cofactor">
    <cofactor evidence="1">
        <name>Mg(2+)</name>
        <dbReference type="ChEBI" id="CHEBI:18420"/>
    </cofactor>
    <cofactor evidence="1">
        <name>Mn(2+)</name>
        <dbReference type="ChEBI" id="CHEBI:29035"/>
    </cofactor>
</comment>
<comment type="similarity">
    <text evidence="1">Belongs to the NAD-dependent DNA ligase family. LigA subfamily.</text>
</comment>
<comment type="sequence caution" evidence="2">
    <conflict type="erroneous initiation">
        <sequence resource="EMBL-CDS" id="AAO44511"/>
    </conflict>
</comment>